<protein>
    <recommendedName>
        <fullName evidence="1">3-hydroxyacyl-[acyl-carrier-protein] dehydratase FabZ</fullName>
        <ecNumber evidence="1">4.2.1.59</ecNumber>
    </recommendedName>
    <alternativeName>
        <fullName evidence="1">(3R)-hydroxymyristoyl-[acyl-carrier-protein] dehydratase</fullName>
        <shortName evidence="1">(3R)-hydroxymyristoyl-ACP dehydrase</shortName>
    </alternativeName>
    <alternativeName>
        <fullName evidence="1">Beta-hydroxyacyl-ACP dehydratase</fullName>
    </alternativeName>
</protein>
<accession>C0Q6K3</accession>
<proteinExistence type="inferred from homology"/>
<comment type="function">
    <text evidence="1">Involved in unsaturated fatty acids biosynthesis. Catalyzes the dehydration of short chain beta-hydroxyacyl-ACPs and long chain saturated and unsaturated beta-hydroxyacyl-ACPs.</text>
</comment>
<comment type="catalytic activity">
    <reaction evidence="1">
        <text>a (3R)-hydroxyacyl-[ACP] = a (2E)-enoyl-[ACP] + H2O</text>
        <dbReference type="Rhea" id="RHEA:13097"/>
        <dbReference type="Rhea" id="RHEA-COMP:9925"/>
        <dbReference type="Rhea" id="RHEA-COMP:9945"/>
        <dbReference type="ChEBI" id="CHEBI:15377"/>
        <dbReference type="ChEBI" id="CHEBI:78784"/>
        <dbReference type="ChEBI" id="CHEBI:78827"/>
        <dbReference type="EC" id="4.2.1.59"/>
    </reaction>
</comment>
<comment type="subcellular location">
    <subcellularLocation>
        <location evidence="1">Cytoplasm</location>
    </subcellularLocation>
</comment>
<comment type="similarity">
    <text evidence="1">Belongs to the thioester dehydratase family. FabZ subfamily.</text>
</comment>
<keyword id="KW-0963">Cytoplasm</keyword>
<keyword id="KW-0441">Lipid A biosynthesis</keyword>
<keyword id="KW-0444">Lipid biosynthesis</keyword>
<keyword id="KW-0443">Lipid metabolism</keyword>
<keyword id="KW-0456">Lyase</keyword>
<organism>
    <name type="scientific">Salmonella paratyphi C (strain RKS4594)</name>
    <dbReference type="NCBI Taxonomy" id="476213"/>
    <lineage>
        <taxon>Bacteria</taxon>
        <taxon>Pseudomonadati</taxon>
        <taxon>Pseudomonadota</taxon>
        <taxon>Gammaproteobacteria</taxon>
        <taxon>Enterobacterales</taxon>
        <taxon>Enterobacteriaceae</taxon>
        <taxon>Salmonella</taxon>
    </lineage>
</organism>
<evidence type="ECO:0000255" key="1">
    <source>
        <dbReference type="HAMAP-Rule" id="MF_00406"/>
    </source>
</evidence>
<reference key="1">
    <citation type="journal article" date="2009" name="PLoS ONE">
        <title>Salmonella paratyphi C: genetic divergence from Salmonella choleraesuis and pathogenic convergence with Salmonella typhi.</title>
        <authorList>
            <person name="Liu W.-Q."/>
            <person name="Feng Y."/>
            <person name="Wang Y."/>
            <person name="Zou Q.-H."/>
            <person name="Chen F."/>
            <person name="Guo J.-T."/>
            <person name="Peng Y.-H."/>
            <person name="Jin Y."/>
            <person name="Li Y.-G."/>
            <person name="Hu S.-N."/>
            <person name="Johnston R.N."/>
            <person name="Liu G.-R."/>
            <person name="Liu S.-L."/>
        </authorList>
    </citation>
    <scope>NUCLEOTIDE SEQUENCE [LARGE SCALE GENOMIC DNA]</scope>
    <source>
        <strain>RKS4594</strain>
    </source>
</reference>
<sequence>MTTNTHTLQIEEILELLPHRFPFLLVDRVLDFEEGRFLRAVKNVSVNEPFFQGHFPGKPILPGVLILEAMAQATGILAFKSVGKLEPGELYYFAGIDEARFKRPVVPGDQMIMEVTFEKTRRGLTRFKGVALVDGKVVCEATMMCARSREA</sequence>
<feature type="chain" id="PRO_1000134708" description="3-hydroxyacyl-[acyl-carrier-protein] dehydratase FabZ">
    <location>
        <begin position="1"/>
        <end position="151"/>
    </location>
</feature>
<feature type="active site" evidence="1">
    <location>
        <position position="54"/>
    </location>
</feature>
<dbReference type="EC" id="4.2.1.59" evidence="1"/>
<dbReference type="EMBL" id="CP000857">
    <property type="protein sequence ID" value="ACN44432.1"/>
    <property type="molecule type" value="Genomic_DNA"/>
</dbReference>
<dbReference type="RefSeq" id="WP_000210741.1">
    <property type="nucleotide sequence ID" value="NC_012125.1"/>
</dbReference>
<dbReference type="SMR" id="C0Q6K3"/>
<dbReference type="GeneID" id="66754751"/>
<dbReference type="KEGG" id="sei:SPC_0243"/>
<dbReference type="HOGENOM" id="CLU_078912_1_0_6"/>
<dbReference type="Proteomes" id="UP000001599">
    <property type="component" value="Chromosome"/>
</dbReference>
<dbReference type="GO" id="GO:0005737">
    <property type="term" value="C:cytoplasm"/>
    <property type="evidence" value="ECO:0007669"/>
    <property type="project" value="UniProtKB-SubCell"/>
</dbReference>
<dbReference type="GO" id="GO:0016020">
    <property type="term" value="C:membrane"/>
    <property type="evidence" value="ECO:0007669"/>
    <property type="project" value="GOC"/>
</dbReference>
<dbReference type="GO" id="GO:0019171">
    <property type="term" value="F:(3R)-hydroxyacyl-[acyl-carrier-protein] dehydratase activity"/>
    <property type="evidence" value="ECO:0007669"/>
    <property type="project" value="UniProtKB-EC"/>
</dbReference>
<dbReference type="GO" id="GO:0006633">
    <property type="term" value="P:fatty acid biosynthetic process"/>
    <property type="evidence" value="ECO:0007669"/>
    <property type="project" value="UniProtKB-UniRule"/>
</dbReference>
<dbReference type="GO" id="GO:0009245">
    <property type="term" value="P:lipid A biosynthetic process"/>
    <property type="evidence" value="ECO:0007669"/>
    <property type="project" value="UniProtKB-UniRule"/>
</dbReference>
<dbReference type="CDD" id="cd01288">
    <property type="entry name" value="FabZ"/>
    <property type="match status" value="1"/>
</dbReference>
<dbReference type="FunFam" id="3.10.129.10:FF:000001">
    <property type="entry name" value="3-hydroxyacyl-[acyl-carrier-protein] dehydratase FabZ"/>
    <property type="match status" value="1"/>
</dbReference>
<dbReference type="Gene3D" id="3.10.129.10">
    <property type="entry name" value="Hotdog Thioesterase"/>
    <property type="match status" value="1"/>
</dbReference>
<dbReference type="HAMAP" id="MF_00406">
    <property type="entry name" value="FabZ"/>
    <property type="match status" value="1"/>
</dbReference>
<dbReference type="InterPro" id="IPR013114">
    <property type="entry name" value="FabA_FabZ"/>
</dbReference>
<dbReference type="InterPro" id="IPR010084">
    <property type="entry name" value="FabZ"/>
</dbReference>
<dbReference type="InterPro" id="IPR029069">
    <property type="entry name" value="HotDog_dom_sf"/>
</dbReference>
<dbReference type="NCBIfam" id="TIGR01750">
    <property type="entry name" value="fabZ"/>
    <property type="match status" value="1"/>
</dbReference>
<dbReference type="NCBIfam" id="NF000582">
    <property type="entry name" value="PRK00006.1"/>
    <property type="match status" value="1"/>
</dbReference>
<dbReference type="PANTHER" id="PTHR30272">
    <property type="entry name" value="3-HYDROXYACYL-[ACYL-CARRIER-PROTEIN] DEHYDRATASE"/>
    <property type="match status" value="1"/>
</dbReference>
<dbReference type="PANTHER" id="PTHR30272:SF1">
    <property type="entry name" value="3-HYDROXYACYL-[ACYL-CARRIER-PROTEIN] DEHYDRATASE"/>
    <property type="match status" value="1"/>
</dbReference>
<dbReference type="Pfam" id="PF07977">
    <property type="entry name" value="FabA"/>
    <property type="match status" value="1"/>
</dbReference>
<dbReference type="SUPFAM" id="SSF54637">
    <property type="entry name" value="Thioesterase/thiol ester dehydrase-isomerase"/>
    <property type="match status" value="1"/>
</dbReference>
<name>FABZ_SALPC</name>
<gene>
    <name evidence="1" type="primary">fabZ</name>
    <name type="ordered locus">SPC_0243</name>
</gene>